<accession>Q9WYG0</accession>
<gene>
    <name type="ordered locus">TM_0325</name>
</gene>
<reference key="1">
    <citation type="journal article" date="1999" name="Nature">
        <title>Evidence for lateral gene transfer between Archaea and Bacteria from genome sequence of Thermotoga maritima.</title>
        <authorList>
            <person name="Nelson K.E."/>
            <person name="Clayton R.A."/>
            <person name="Gill S.R."/>
            <person name="Gwinn M.L."/>
            <person name="Dodson R.J."/>
            <person name="Haft D.H."/>
            <person name="Hickey E.K."/>
            <person name="Peterson J.D."/>
            <person name="Nelson W.C."/>
            <person name="Ketchum K.A."/>
            <person name="McDonald L.A."/>
            <person name="Utterback T.R."/>
            <person name="Malek J.A."/>
            <person name="Linher K.D."/>
            <person name="Garrett M.M."/>
            <person name="Stewart A.M."/>
            <person name="Cotton M.D."/>
            <person name="Pratt M.S."/>
            <person name="Phillips C.A."/>
            <person name="Richardson D.L."/>
            <person name="Heidelberg J.F."/>
            <person name="Sutton G.G."/>
            <person name="Fleischmann R.D."/>
            <person name="Eisen J.A."/>
            <person name="White O."/>
            <person name="Salzberg S.L."/>
            <person name="Smith H.O."/>
            <person name="Venter J.C."/>
            <person name="Fraser C.M."/>
        </authorList>
    </citation>
    <scope>NUCLEOTIDE SEQUENCE [LARGE SCALE GENOMIC DNA]</scope>
    <source>
        <strain>ATCC 43589 / DSM 3109 / JCM 10099 / NBRC 100826 / MSB8</strain>
    </source>
</reference>
<dbReference type="EC" id="1.-.-.-"/>
<dbReference type="EMBL" id="AE000512">
    <property type="protein sequence ID" value="AAD35412.1"/>
    <property type="molecule type" value="Genomic_DNA"/>
</dbReference>
<dbReference type="PIR" id="G72389">
    <property type="entry name" value="G72389"/>
</dbReference>
<dbReference type="RefSeq" id="NP_228136.1">
    <property type="nucleotide sequence ID" value="NC_000853.1"/>
</dbReference>
<dbReference type="RefSeq" id="WP_004083078.1">
    <property type="nucleotide sequence ID" value="NZ_CP011107.1"/>
</dbReference>
<dbReference type="SMR" id="Q9WYG0"/>
<dbReference type="STRING" id="243274.TM_0325"/>
<dbReference type="PaxDb" id="243274-THEMA_03100"/>
<dbReference type="EnsemblBacteria" id="AAD35412">
    <property type="protein sequence ID" value="AAD35412"/>
    <property type="gene ID" value="TM_0325"/>
</dbReference>
<dbReference type="KEGG" id="tma:TM0325"/>
<dbReference type="KEGG" id="tmi:THEMA_03100"/>
<dbReference type="KEGG" id="tmm:Tmari_0323"/>
<dbReference type="KEGG" id="tmw:THMA_0332"/>
<dbReference type="eggNOG" id="COG1028">
    <property type="taxonomic scope" value="Bacteria"/>
</dbReference>
<dbReference type="InParanoid" id="Q9WYG0"/>
<dbReference type="OrthoDB" id="9803333at2"/>
<dbReference type="Proteomes" id="UP000008183">
    <property type="component" value="Chromosome"/>
</dbReference>
<dbReference type="GO" id="GO:0016491">
    <property type="term" value="F:oxidoreductase activity"/>
    <property type="evidence" value="ECO:0000318"/>
    <property type="project" value="GO_Central"/>
</dbReference>
<dbReference type="CDD" id="cd05233">
    <property type="entry name" value="SDR_c"/>
    <property type="match status" value="1"/>
</dbReference>
<dbReference type="FunFam" id="3.40.50.720:FF:000084">
    <property type="entry name" value="Short-chain dehydrogenase reductase"/>
    <property type="match status" value="1"/>
</dbReference>
<dbReference type="Gene3D" id="3.40.50.720">
    <property type="entry name" value="NAD(P)-binding Rossmann-like Domain"/>
    <property type="match status" value="1"/>
</dbReference>
<dbReference type="InterPro" id="IPR036291">
    <property type="entry name" value="NAD(P)-bd_dom_sf"/>
</dbReference>
<dbReference type="InterPro" id="IPR020904">
    <property type="entry name" value="Sc_DH/Rdtase_CS"/>
</dbReference>
<dbReference type="InterPro" id="IPR002347">
    <property type="entry name" value="SDR_fam"/>
</dbReference>
<dbReference type="InterPro" id="IPR051122">
    <property type="entry name" value="SDR_superfamily_enzyme"/>
</dbReference>
<dbReference type="NCBIfam" id="NF005559">
    <property type="entry name" value="PRK07231.1"/>
    <property type="match status" value="1"/>
</dbReference>
<dbReference type="PANTHER" id="PTHR43477">
    <property type="entry name" value="DIHYDROANTICAPSIN 7-DEHYDROGENASE"/>
    <property type="match status" value="1"/>
</dbReference>
<dbReference type="PANTHER" id="PTHR43477:SF1">
    <property type="entry name" value="DIHYDROANTICAPSIN 7-DEHYDROGENASE"/>
    <property type="match status" value="1"/>
</dbReference>
<dbReference type="Pfam" id="PF13561">
    <property type="entry name" value="adh_short_C2"/>
    <property type="match status" value="1"/>
</dbReference>
<dbReference type="PRINTS" id="PR00081">
    <property type="entry name" value="GDHRDH"/>
</dbReference>
<dbReference type="PRINTS" id="PR00080">
    <property type="entry name" value="SDRFAMILY"/>
</dbReference>
<dbReference type="SUPFAM" id="SSF51735">
    <property type="entry name" value="NAD(P)-binding Rossmann-fold domains"/>
    <property type="match status" value="1"/>
</dbReference>
<dbReference type="PROSITE" id="PS00061">
    <property type="entry name" value="ADH_SHORT"/>
    <property type="match status" value="1"/>
</dbReference>
<proteinExistence type="inferred from homology"/>
<sequence>MNFQGKVVLITGAGSGIGKKAAVMFAERGAKVAINDISEEKGKETVELIKSMGGEAAFIFGDVAKDAEQIVKKTVETFGRLDILVNNAGIVPYGNIEETSEEDFDKTMAVNVKGPFLLSKYAVEQMKKQGGGVIVNVSSEAGLIGIPRRCVYSVSKAALLGLTRSLAVDYVDYGIRVNAVCPGTTQSEGLMARVKASPNPEELLKKMTSRIPMKRLGKEEEIAFAILFAACDEAGFMTGSIINIDGGSTAV</sequence>
<protein>
    <recommendedName>
        <fullName>Uncharacterized oxidoreductase TM_0325</fullName>
        <ecNumber>1.-.-.-</ecNumber>
    </recommendedName>
</protein>
<evidence type="ECO:0000250" key="1"/>
<evidence type="ECO:0000255" key="2">
    <source>
        <dbReference type="PROSITE-ProRule" id="PRU10001"/>
    </source>
</evidence>
<evidence type="ECO:0000305" key="3"/>
<name>Y325_THEMA</name>
<organism>
    <name type="scientific">Thermotoga maritima (strain ATCC 43589 / DSM 3109 / JCM 10099 / NBRC 100826 / MSB8)</name>
    <dbReference type="NCBI Taxonomy" id="243274"/>
    <lineage>
        <taxon>Bacteria</taxon>
        <taxon>Thermotogati</taxon>
        <taxon>Thermotogota</taxon>
        <taxon>Thermotogae</taxon>
        <taxon>Thermotogales</taxon>
        <taxon>Thermotogaceae</taxon>
        <taxon>Thermotoga</taxon>
    </lineage>
</organism>
<keyword id="KW-0560">Oxidoreductase</keyword>
<keyword id="KW-1185">Reference proteome</keyword>
<feature type="chain" id="PRO_0000054867" description="Uncharacterized oxidoreductase TM_0325">
    <location>
        <begin position="1"/>
        <end position="251"/>
    </location>
</feature>
<feature type="active site" description="Proton acceptor" evidence="2">
    <location>
        <position position="152"/>
    </location>
</feature>
<feature type="binding site" evidence="1">
    <location>
        <begin position="10"/>
        <end position="34"/>
    </location>
    <ligand>
        <name>NADP(+)</name>
        <dbReference type="ChEBI" id="CHEBI:58349"/>
    </ligand>
</feature>
<feature type="binding site" evidence="1">
    <location>
        <position position="139"/>
    </location>
    <ligand>
        <name>substrate</name>
    </ligand>
</feature>
<comment type="similarity">
    <text evidence="3">Belongs to the short-chain dehydrogenases/reductases (SDR) family.</text>
</comment>